<gene>
    <name evidence="3" type="primary">metC</name>
    <name evidence="6" type="ordered locus">SH2636</name>
</gene>
<keyword id="KW-0028">Amino-acid biosynthesis</keyword>
<keyword id="KW-0456">Lyase</keyword>
<keyword id="KW-0486">Methionine biosynthesis</keyword>
<keyword id="KW-0663">Pyridoxal phosphate</keyword>
<feature type="chain" id="PRO_0000445392" description="Cystathionine beta-lyase MetC">
    <location>
        <begin position="1"/>
        <end position="391"/>
    </location>
</feature>
<feature type="modified residue" description="N6-(pyridoxal phosphate)lysine" evidence="1">
    <location>
        <position position="196"/>
    </location>
</feature>
<dbReference type="EC" id="4.4.1.13" evidence="2"/>
<dbReference type="EMBL" id="AP006716">
    <property type="protein sequence ID" value="BAE05945.1"/>
    <property type="molecule type" value="Genomic_DNA"/>
</dbReference>
<dbReference type="RefSeq" id="WP_011276875.1">
    <property type="nucleotide sequence ID" value="NC_007168.1"/>
</dbReference>
<dbReference type="SMR" id="Q4L332"/>
<dbReference type="KEGG" id="sha:SH2636"/>
<dbReference type="eggNOG" id="COG0626">
    <property type="taxonomic scope" value="Bacteria"/>
</dbReference>
<dbReference type="HOGENOM" id="CLU_018986_2_0_9"/>
<dbReference type="OrthoDB" id="9780685at2"/>
<dbReference type="UniPathway" id="UPA00051">
    <property type="reaction ID" value="UER00078"/>
</dbReference>
<dbReference type="Proteomes" id="UP000000543">
    <property type="component" value="Chromosome"/>
</dbReference>
<dbReference type="GO" id="GO:0005737">
    <property type="term" value="C:cytoplasm"/>
    <property type="evidence" value="ECO:0007669"/>
    <property type="project" value="TreeGrafter"/>
</dbReference>
<dbReference type="GO" id="GO:0047804">
    <property type="term" value="F:cysteine-S-conjugate beta-lyase activity"/>
    <property type="evidence" value="ECO:0007669"/>
    <property type="project" value="UniProtKB-EC"/>
</dbReference>
<dbReference type="GO" id="GO:0030170">
    <property type="term" value="F:pyridoxal phosphate binding"/>
    <property type="evidence" value="ECO:0007669"/>
    <property type="project" value="InterPro"/>
</dbReference>
<dbReference type="GO" id="GO:0009086">
    <property type="term" value="P:methionine biosynthetic process"/>
    <property type="evidence" value="ECO:0007669"/>
    <property type="project" value="UniProtKB-KW"/>
</dbReference>
<dbReference type="GO" id="GO:0019346">
    <property type="term" value="P:transsulfuration"/>
    <property type="evidence" value="ECO:0007669"/>
    <property type="project" value="InterPro"/>
</dbReference>
<dbReference type="CDD" id="cd00614">
    <property type="entry name" value="CGS_like"/>
    <property type="match status" value="1"/>
</dbReference>
<dbReference type="FunFam" id="3.40.640.10:FF:000009">
    <property type="entry name" value="Cystathionine gamma-synthase homolog"/>
    <property type="match status" value="1"/>
</dbReference>
<dbReference type="Gene3D" id="3.90.1150.10">
    <property type="entry name" value="Aspartate Aminotransferase, domain 1"/>
    <property type="match status" value="1"/>
</dbReference>
<dbReference type="Gene3D" id="3.40.640.10">
    <property type="entry name" value="Type I PLP-dependent aspartate aminotransferase-like (Major domain)"/>
    <property type="match status" value="1"/>
</dbReference>
<dbReference type="InterPro" id="IPR000277">
    <property type="entry name" value="Cys/Met-Metab_PyrdxlP-dep_enz"/>
</dbReference>
<dbReference type="InterPro" id="IPR054542">
    <property type="entry name" value="Cys_met_metab_PP"/>
</dbReference>
<dbReference type="InterPro" id="IPR015424">
    <property type="entry name" value="PyrdxlP-dep_Trfase"/>
</dbReference>
<dbReference type="InterPro" id="IPR015421">
    <property type="entry name" value="PyrdxlP-dep_Trfase_major"/>
</dbReference>
<dbReference type="InterPro" id="IPR015422">
    <property type="entry name" value="PyrdxlP-dep_Trfase_small"/>
</dbReference>
<dbReference type="InterPro" id="IPR053577">
    <property type="entry name" value="Trans-sulfuration_enzyme"/>
</dbReference>
<dbReference type="NCBIfam" id="NF043007">
    <property type="entry name" value="CysBLyMetC_Staph"/>
    <property type="match status" value="1"/>
</dbReference>
<dbReference type="PANTHER" id="PTHR11808:SF50">
    <property type="entry name" value="CYSTATHIONINE BETA-LYASE"/>
    <property type="match status" value="1"/>
</dbReference>
<dbReference type="PANTHER" id="PTHR11808">
    <property type="entry name" value="TRANS-SULFURATION ENZYME FAMILY MEMBER"/>
    <property type="match status" value="1"/>
</dbReference>
<dbReference type="Pfam" id="PF01053">
    <property type="entry name" value="Cys_Met_Meta_PP"/>
    <property type="match status" value="1"/>
</dbReference>
<dbReference type="PIRSF" id="PIRSF001434">
    <property type="entry name" value="CGS"/>
    <property type="match status" value="1"/>
</dbReference>
<dbReference type="SUPFAM" id="SSF53383">
    <property type="entry name" value="PLP-dependent transferases"/>
    <property type="match status" value="1"/>
</dbReference>
<dbReference type="PROSITE" id="PS00868">
    <property type="entry name" value="CYS_MET_METAB_PP"/>
    <property type="match status" value="1"/>
</dbReference>
<name>METC_STAHJ</name>
<evidence type="ECO:0000250" key="1">
    <source>
        <dbReference type="UniProtKB" id="P06721"/>
    </source>
</evidence>
<evidence type="ECO:0000269" key="2">
    <source>
    </source>
</evidence>
<evidence type="ECO:0000303" key="3">
    <source>
    </source>
</evidence>
<evidence type="ECO:0000305" key="4"/>
<evidence type="ECO:0000305" key="5">
    <source>
    </source>
</evidence>
<evidence type="ECO:0000312" key="6">
    <source>
        <dbReference type="EMBL" id="BAE05945.1"/>
    </source>
</evidence>
<proteinExistence type="evidence at protein level"/>
<reference key="1">
    <citation type="journal article" date="2005" name="J. Bacteriol.">
        <title>Whole-genome sequencing of Staphylococcus haemolyticus uncovers the extreme plasticity of its genome and the evolution of human-colonizing staphylococcal species.</title>
        <authorList>
            <person name="Takeuchi F."/>
            <person name="Watanabe S."/>
            <person name="Baba T."/>
            <person name="Yuzawa H."/>
            <person name="Ito T."/>
            <person name="Morimoto Y."/>
            <person name="Kuroda M."/>
            <person name="Cui L."/>
            <person name="Takahashi M."/>
            <person name="Ankai A."/>
            <person name="Baba S."/>
            <person name="Fukui S."/>
            <person name="Lee J.C."/>
            <person name="Hiramatsu K."/>
        </authorList>
    </citation>
    <scope>NUCLEOTIDE SEQUENCE [LARGE SCALE GENOMIC DNA]</scope>
    <source>
        <strain>JCSC1435</strain>
    </source>
</reference>
<reference key="2">
    <citation type="journal article" date="2008" name="Chem. Biodivers.">
        <title>Properties of recombinant Staphylococcus haemolyticus cystathionine beta-lyase (metC) and its potential role in the generation of volatile thiols in axillary malodor.</title>
        <authorList>
            <person name="Troccaz M."/>
            <person name="Benattia F."/>
            <person name="Borchard G."/>
            <person name="Clark A.J."/>
        </authorList>
    </citation>
    <scope>FUNCTION</scope>
    <scope>CATALYTIC ACTIVITY</scope>
    <scope>COFACTOR</scope>
    <scope>ACTIVITY REGULATION</scope>
    <scope>BIOPHYSICOCHEMICAL PROPERTIES</scope>
    <scope>PATHWAY</scope>
    <scope>SUBUNIT</scope>
    <source>
        <strain>AX3</strain>
    </source>
</reference>
<protein>
    <recommendedName>
        <fullName evidence="3">Cystathionine beta-lyase MetC</fullName>
        <shortName evidence="3">CBL</shortName>
        <ecNumber evidence="2">4.4.1.13</ecNumber>
    </recommendedName>
    <alternativeName>
        <fullName evidence="3">Beta-cystathionase</fullName>
    </alternativeName>
    <alternativeName>
        <fullName evidence="3">Cysteine lyase</fullName>
    </alternativeName>
    <alternativeName>
        <fullName>Cysteine-S-conjugate beta-lyase</fullName>
    </alternativeName>
</protein>
<sequence>MSLSKETEVIFDEHRGVDYDSANPPLYDSSTFHQKVLGGNAKFDYARSGNPNRQLLEEKLAKLEGGQYAFAYASGIAAISAVLLTLKANDHVILPDDVYGGTFRLTEQILNRFDIQFTTVNATQPKEIERAIQPNTKLIYVETPSNPCFKITDIRAVAAIAKRHHLLLAVDNTFMTPLGQSPLALGADIVVHSATKFLGGHSDIIAGAAITNRKDVADALYLLQNGTGTALSAHDSWTLAKHLKTLPVRFKQSTSNAEKLVAFLKEREEIAEVYYPGNSSLHLSQANSGGAVIGFRLKDETKTQDFVDALTLPLVSVSLGGVETILSHPATMSHAAVPEDVRNERGITFGLFRLSVGLEQPQELIADLNYALKEAFNESIIESITEQRFSS</sequence>
<organism>
    <name type="scientific">Staphylococcus haemolyticus (strain JCSC1435)</name>
    <dbReference type="NCBI Taxonomy" id="279808"/>
    <lineage>
        <taxon>Bacteria</taxon>
        <taxon>Bacillati</taxon>
        <taxon>Bacillota</taxon>
        <taxon>Bacilli</taxon>
        <taxon>Bacillales</taxon>
        <taxon>Staphylococcaceae</taxon>
        <taxon>Staphylococcus</taxon>
    </lineage>
</organism>
<accession>Q4L332</accession>
<comment type="function">
    <text evidence="2">Catalyzes the transformation of cystathionine into homocysteine (PubMed:19035565). Can also catalyze, at low levels, the conversion of cystathionine into methionine and the conversion of methionine into methanethiol (PubMed:19035565).</text>
</comment>
<comment type="catalytic activity">
    <reaction evidence="2">
        <text>L,L-cystathionine + H2O = L-homocysteine + pyruvate + NH4(+)</text>
        <dbReference type="Rhea" id="RHEA:13965"/>
        <dbReference type="ChEBI" id="CHEBI:15361"/>
        <dbReference type="ChEBI" id="CHEBI:15377"/>
        <dbReference type="ChEBI" id="CHEBI:28938"/>
        <dbReference type="ChEBI" id="CHEBI:58161"/>
        <dbReference type="ChEBI" id="CHEBI:58199"/>
    </reaction>
</comment>
<comment type="catalytic activity">
    <reaction evidence="2">
        <text>an S-substituted L-cysteine + H2O = a thiol + pyruvate + NH4(+)</text>
        <dbReference type="Rhea" id="RHEA:18121"/>
        <dbReference type="ChEBI" id="CHEBI:15361"/>
        <dbReference type="ChEBI" id="CHEBI:15377"/>
        <dbReference type="ChEBI" id="CHEBI:28938"/>
        <dbReference type="ChEBI" id="CHEBI:29256"/>
        <dbReference type="ChEBI" id="CHEBI:58717"/>
        <dbReference type="EC" id="4.4.1.13"/>
    </reaction>
</comment>
<comment type="cofactor">
    <cofactor evidence="2">
        <name>pyridoxal 5'-phosphate</name>
        <dbReference type="ChEBI" id="CHEBI:597326"/>
    </cofactor>
</comment>
<comment type="activity regulation">
    <text evidence="2">Cystathionine beta-lyase activity is inhibited by sweat components such as glycine, serine and ammonium sulfate. Inhibited by cystathionine at a concentration higher than 6 mM.</text>
</comment>
<comment type="biophysicochemical properties">
    <kinetics>
        <KM evidence="2">1.2 mM for L-cystathionine</KM>
        <Vmax evidence="2">32.0 umol/min/mg enzyme with L-cystathionine as substrate</Vmax>
        <Vmax>3.6 umol/min/mg enzyme with methionine as substrate</Vmax>
    </kinetics>
    <phDependence>
        <text evidence="2">Optimum pH is 8.5.</text>
    </phDependence>
    <temperatureDependence>
        <text evidence="2">Optimum temperature is 37 degrees Celsius.</text>
    </temperatureDependence>
</comment>
<comment type="pathway">
    <text evidence="5">Amino-acid biosynthesis; L-methionine biosynthesis via de novo pathway; L-homocysteine from L-cystathionine: step 1/1.</text>
</comment>
<comment type="subunit">
    <text evidence="5">Homotetramer.</text>
</comment>
<comment type="similarity">
    <text evidence="4">Belongs to the trans-sulfuration enzymes family.</text>
</comment>